<reference key="1">
    <citation type="journal article" date="1988" name="J. Mol. Biol.">
        <title>Sequence analysis of mitochondrial DNA from Podospora anserina. Pervasiveness of a class I intron in three separate genes.</title>
        <authorList>
            <person name="Cummings D.J."/>
            <person name="Domenico J.M."/>
        </authorList>
    </citation>
    <scope>NUCLEOTIDE SEQUENCE [GENOMIC DNA]</scope>
    <source>
        <strain>A</strain>
        <strain>s</strain>
    </source>
</reference>
<reference key="2">
    <citation type="journal article" date="1990" name="Curr. Genet.">
        <title>The complete DNA sequence of the mitochondrial genome of Podospora anserina.</title>
        <authorList>
            <person name="Cummings D.J."/>
            <person name="McNally K.L."/>
            <person name="Domenico J.M."/>
            <person name="Matsuura E.T."/>
        </authorList>
    </citation>
    <scope>NUCLEOTIDE SEQUENCE [LARGE SCALE GENOMIC DNA]</scope>
    <source>
        <strain>s</strain>
    </source>
</reference>
<proteinExistence type="inferred from homology"/>
<dbReference type="EC" id="7.1.1.2"/>
<dbReference type="EMBL" id="X55026">
    <property type="protein sequence ID" value="CAA38806.1"/>
    <property type="molecule type" value="Genomic_DNA"/>
</dbReference>
<dbReference type="EMBL" id="X14484">
    <property type="protein sequence ID" value="CAA32645.1"/>
    <property type="molecule type" value="Genomic_DNA"/>
</dbReference>
<dbReference type="PIR" id="S02153">
    <property type="entry name" value="S02153"/>
</dbReference>
<dbReference type="SMR" id="P15582"/>
<dbReference type="STRING" id="515849.P15582"/>
<dbReference type="TCDB" id="3.D.1.6.2">
    <property type="family name" value="the h+ or na+-translocating nadh dehydrogenase (ndh) family"/>
</dbReference>
<dbReference type="KEGG" id="pan:PoanfMp46"/>
<dbReference type="InParanoid" id="P15582"/>
<dbReference type="Proteomes" id="UP000001197">
    <property type="component" value="Mitochondrion"/>
</dbReference>
<dbReference type="GO" id="GO:0031966">
    <property type="term" value="C:mitochondrial membrane"/>
    <property type="evidence" value="ECO:0007669"/>
    <property type="project" value="UniProtKB-SubCell"/>
</dbReference>
<dbReference type="GO" id="GO:0008137">
    <property type="term" value="F:NADH dehydrogenase (ubiquinone) activity"/>
    <property type="evidence" value="ECO:0007669"/>
    <property type="project" value="UniProtKB-EC"/>
</dbReference>
<dbReference type="GO" id="GO:0048039">
    <property type="term" value="F:ubiquinone binding"/>
    <property type="evidence" value="ECO:0007669"/>
    <property type="project" value="TreeGrafter"/>
</dbReference>
<dbReference type="GO" id="GO:0042773">
    <property type="term" value="P:ATP synthesis coupled electron transport"/>
    <property type="evidence" value="ECO:0007669"/>
    <property type="project" value="InterPro"/>
</dbReference>
<dbReference type="GO" id="GO:0015990">
    <property type="term" value="P:electron transport coupled proton transport"/>
    <property type="evidence" value="ECO:0007669"/>
    <property type="project" value="TreeGrafter"/>
</dbReference>
<dbReference type="InterPro" id="IPR010227">
    <property type="entry name" value="NADH_Q_OxRdtase_chainM/4"/>
</dbReference>
<dbReference type="InterPro" id="IPR003918">
    <property type="entry name" value="NADH_UbQ_OxRdtase"/>
</dbReference>
<dbReference type="InterPro" id="IPR001750">
    <property type="entry name" value="ND/Mrp_TM"/>
</dbReference>
<dbReference type="NCBIfam" id="TIGR01972">
    <property type="entry name" value="NDH_I_M"/>
    <property type="match status" value="1"/>
</dbReference>
<dbReference type="PANTHER" id="PTHR43507">
    <property type="entry name" value="NADH-UBIQUINONE OXIDOREDUCTASE CHAIN 4"/>
    <property type="match status" value="1"/>
</dbReference>
<dbReference type="PANTHER" id="PTHR43507:SF1">
    <property type="entry name" value="NADH-UBIQUINONE OXIDOREDUCTASE CHAIN 4"/>
    <property type="match status" value="1"/>
</dbReference>
<dbReference type="Pfam" id="PF00361">
    <property type="entry name" value="Proton_antipo_M"/>
    <property type="match status" value="1"/>
</dbReference>
<dbReference type="PRINTS" id="PR01437">
    <property type="entry name" value="NUOXDRDTASE4"/>
</dbReference>
<geneLocation type="mitochondrion"/>
<sequence>MSGLLYALLIIPMIGIFFILSFDSYNFNITSNNSNSGSFSEAGAGKNSGGELLKVLVINNELNFYKKIAFITTIMNLIVSLIIYILFDFSTNQFQFVQDALELSVYNIYLGVDGLSIYFVLLTTIIMPIALISNWNSITHNIKAYLIIILLLETLLLAVFLVLDVLLFYIFFESILPPLFILIGLFGSSNKVRASFYIFLYTLLGSLFLLLSILTMSSLIGTTYLDVLSKSNFEYTTQIFLFLGVFIAFAVKTPTVFLNSWLLKAHVESPLGGSIVLAGIVLKLSLYGIFRLILPLLPKISLNYTSIIFSIGIITIIYASFSTLRTIDIKELIAYSSVSHAAVYLIGVFSNIIQGIEGGILLGLGHGFVSSGLFICAGGVLYDRSGTRIISYYRGTAQVMPLFSILFFILCLGNCGAPLTLNFVGEFMSLYGTFERLPLLGLFSSSSMIFSAAYTIYMYNRIAFGGSFSKFFEENIGDVTKREFFLLFTLIIFTIMFGIYPSFILDGLHYNVTSLLFGV</sequence>
<protein>
    <recommendedName>
        <fullName>NADH-ubiquinone oxidoreductase chain 4</fullName>
        <ecNumber>7.1.1.2</ecNumber>
    </recommendedName>
    <alternativeName>
        <fullName>NADH dehydrogenase subunit 4</fullName>
    </alternativeName>
</protein>
<comment type="function">
    <text evidence="1">Core subunit of the mitochondrial membrane respiratory chain NADH dehydrogenase (Complex I) that is believed to belong to the minimal assembly required for catalysis. Complex I functions in the transfer of electrons from NADH to the respiratory chain. The immediate electron acceptor for the enzyme is believed to be ubiquinone (By similarity).</text>
</comment>
<comment type="catalytic activity">
    <reaction>
        <text>a ubiquinone + NADH + 5 H(+)(in) = a ubiquinol + NAD(+) + 4 H(+)(out)</text>
        <dbReference type="Rhea" id="RHEA:29091"/>
        <dbReference type="Rhea" id="RHEA-COMP:9565"/>
        <dbReference type="Rhea" id="RHEA-COMP:9566"/>
        <dbReference type="ChEBI" id="CHEBI:15378"/>
        <dbReference type="ChEBI" id="CHEBI:16389"/>
        <dbReference type="ChEBI" id="CHEBI:17976"/>
        <dbReference type="ChEBI" id="CHEBI:57540"/>
        <dbReference type="ChEBI" id="CHEBI:57945"/>
        <dbReference type="EC" id="7.1.1.2"/>
    </reaction>
</comment>
<comment type="subcellular location">
    <subcellularLocation>
        <location evidence="1">Mitochondrion membrane</location>
        <topology evidence="1">Multi-pass membrane protein</topology>
    </subcellularLocation>
</comment>
<comment type="similarity">
    <text evidence="3">Belongs to the complex I subunit 4 family.</text>
</comment>
<keyword id="KW-0249">Electron transport</keyword>
<keyword id="KW-0472">Membrane</keyword>
<keyword id="KW-0496">Mitochondrion</keyword>
<keyword id="KW-0520">NAD</keyword>
<keyword id="KW-1185">Reference proteome</keyword>
<keyword id="KW-0679">Respiratory chain</keyword>
<keyword id="KW-1278">Translocase</keyword>
<keyword id="KW-0812">Transmembrane</keyword>
<keyword id="KW-1133">Transmembrane helix</keyword>
<keyword id="KW-0813">Transport</keyword>
<keyword id="KW-0830">Ubiquinone</keyword>
<accession>P15582</accession>
<evidence type="ECO:0000250" key="1"/>
<evidence type="ECO:0000255" key="2"/>
<evidence type="ECO:0000305" key="3"/>
<organism>
    <name type="scientific">Podospora anserina (strain S / ATCC MYA-4624 / DSM 980 / FGSC 10383)</name>
    <name type="common">Pleurage anserina</name>
    <dbReference type="NCBI Taxonomy" id="515849"/>
    <lineage>
        <taxon>Eukaryota</taxon>
        <taxon>Fungi</taxon>
        <taxon>Dikarya</taxon>
        <taxon>Ascomycota</taxon>
        <taxon>Pezizomycotina</taxon>
        <taxon>Sordariomycetes</taxon>
        <taxon>Sordariomycetidae</taxon>
        <taxon>Sordariales</taxon>
        <taxon>Podosporaceae</taxon>
        <taxon>Podospora</taxon>
        <taxon>Podospora anserina</taxon>
    </lineage>
</organism>
<feature type="chain" id="PRO_0000117972" description="NADH-ubiquinone oxidoreductase chain 4">
    <location>
        <begin position="1"/>
        <end position="519"/>
    </location>
</feature>
<feature type="transmembrane region" description="Helical" evidence="2">
    <location>
        <begin position="2"/>
        <end position="22"/>
    </location>
</feature>
<feature type="transmembrane region" description="Helical" evidence="2">
    <location>
        <begin position="68"/>
        <end position="88"/>
    </location>
</feature>
<feature type="transmembrane region" description="Helical" evidence="2">
    <location>
        <begin position="112"/>
        <end position="132"/>
    </location>
</feature>
<feature type="transmembrane region" description="Helical" evidence="2">
    <location>
        <begin position="146"/>
        <end position="166"/>
    </location>
</feature>
<feature type="transmembrane region" description="Helical" evidence="2">
    <location>
        <begin position="167"/>
        <end position="187"/>
    </location>
</feature>
<feature type="transmembrane region" description="Helical" evidence="2">
    <location>
        <begin position="196"/>
        <end position="216"/>
    </location>
</feature>
<feature type="transmembrane region" description="Helical" evidence="2">
    <location>
        <begin position="239"/>
        <end position="259"/>
    </location>
</feature>
<feature type="transmembrane region" description="Helical" evidence="2">
    <location>
        <begin position="270"/>
        <end position="290"/>
    </location>
</feature>
<feature type="transmembrane region" description="Helical" evidence="2">
    <location>
        <begin position="304"/>
        <end position="324"/>
    </location>
</feature>
<feature type="transmembrane region" description="Helical" evidence="2">
    <location>
        <begin position="333"/>
        <end position="353"/>
    </location>
</feature>
<feature type="transmembrane region" description="Helical" evidence="2">
    <location>
        <begin position="360"/>
        <end position="380"/>
    </location>
</feature>
<feature type="transmembrane region" description="Helical" evidence="2">
    <location>
        <begin position="399"/>
        <end position="419"/>
    </location>
</feature>
<feature type="transmembrane region" description="Helical" evidence="2">
    <location>
        <begin position="437"/>
        <end position="457"/>
    </location>
</feature>
<feature type="transmembrane region" description="Helical" evidence="2">
    <location>
        <begin position="484"/>
        <end position="504"/>
    </location>
</feature>
<name>NU4M_PODAN</name>
<gene>
    <name type="primary">ND4</name>
</gene>